<comment type="function">
    <text evidence="2">Calcium-binding peroxygenase involved in the degradation of storage lipid in oil bodies.</text>
</comment>
<comment type="catalytic activity">
    <reaction evidence="2">
        <text>RH + ROOH = ROH + ROH.</text>
        <dbReference type="EC" id="1.11.2.3"/>
    </reaction>
</comment>
<comment type="cofactor">
    <cofactor evidence="2">
        <name>heme b</name>
        <dbReference type="ChEBI" id="CHEBI:60344"/>
    </cofactor>
    <text evidence="2">Binds 1 heme b (iron(II)-protoporphyrin IX) group.</text>
</comment>
<comment type="cofactor">
    <cofactor evidence="1">
        <name>Ca(2+)</name>
        <dbReference type="ChEBI" id="CHEBI:29108"/>
    </cofactor>
</comment>
<comment type="subunit">
    <text evidence="2">Homodimer.</text>
</comment>
<comment type="subcellular location">
    <subcellularLocation>
        <location evidence="5">Lipid droplet</location>
    </subcellularLocation>
    <subcellularLocation>
        <location evidence="3">Microsome membrane</location>
    </subcellularLocation>
</comment>
<comment type="tissue specificity">
    <text evidence="5">Expressed in pollen (at protein level).</text>
</comment>
<comment type="domain">
    <text evidence="7">Transmembrane regions are predicted by sequence analysis tools, but these regions probably constitute hydrophobic domains associated to phospholipids.</text>
</comment>
<comment type="domain">
    <text evidence="7">The proline-knot motif may be involved in targeting to lipid bodies.</text>
</comment>
<comment type="similarity">
    <text evidence="7">Belongs to the caleosin family.</text>
</comment>
<organism evidence="9">
    <name type="scientific">Pinus elliottii</name>
    <name type="common">Slash pine</name>
    <dbReference type="NCBI Taxonomy" id="42064"/>
    <lineage>
        <taxon>Eukaryota</taxon>
        <taxon>Viridiplantae</taxon>
        <taxon>Streptophyta</taxon>
        <taxon>Embryophyta</taxon>
        <taxon>Tracheophyta</taxon>
        <taxon>Spermatophyta</taxon>
        <taxon>Pinopsida</taxon>
        <taxon>Pinidae</taxon>
        <taxon>Conifers I</taxon>
        <taxon>Pinales</taxon>
        <taxon>Pinaceae</taxon>
        <taxon>Pinus</taxon>
        <taxon>Pinus subgen. Pinus</taxon>
    </lineage>
</organism>
<feature type="initiator methionine" description="Removed" evidence="3">
    <location>
        <position position="1"/>
    </location>
</feature>
<feature type="chain" id="PRO_0000450065" description="Peroxygenase" evidence="3">
    <location>
        <begin position="2"/>
        <end position="234"/>
    </location>
</feature>
<feature type="domain" description="EF-hand" evidence="3">
    <location>
        <begin position="56"/>
        <end position="91"/>
    </location>
</feature>
<feature type="short sequence motif" description="Proline-knot" evidence="8">
    <location>
        <begin position="112"/>
        <end position="121"/>
    </location>
</feature>
<feature type="binding site" description="axial binding residue" evidence="2">
    <location>
        <position position="64"/>
    </location>
    <ligand>
        <name>heme</name>
        <dbReference type="ChEBI" id="CHEBI:30413"/>
    </ligand>
    <ligandPart>
        <name>Fe</name>
        <dbReference type="ChEBI" id="CHEBI:18248"/>
    </ligandPart>
</feature>
<feature type="binding site" evidence="4">
    <location>
        <position position="69"/>
    </location>
    <ligand>
        <name>Ca(2+)</name>
        <dbReference type="ChEBI" id="CHEBI:29108"/>
    </ligand>
</feature>
<feature type="binding site" evidence="4">
    <location>
        <position position="71"/>
    </location>
    <ligand>
        <name>Ca(2+)</name>
        <dbReference type="ChEBI" id="CHEBI:29108"/>
    </ligand>
</feature>
<feature type="binding site" evidence="4">
    <location>
        <position position="73"/>
    </location>
    <ligand>
        <name>Ca(2+)</name>
        <dbReference type="ChEBI" id="CHEBI:29108"/>
    </ligand>
</feature>
<feature type="binding site" evidence="4">
    <location>
        <position position="80"/>
    </location>
    <ligand>
        <name>Ca(2+)</name>
        <dbReference type="ChEBI" id="CHEBI:29108"/>
    </ligand>
</feature>
<feature type="modified residue" description="N-acetylalanine" evidence="3">
    <location>
        <position position="2"/>
    </location>
</feature>
<keyword id="KW-0007">Acetylation</keyword>
<keyword id="KW-0106">Calcium</keyword>
<keyword id="KW-0256">Endoplasmic reticulum</keyword>
<keyword id="KW-0349">Heme</keyword>
<keyword id="KW-0408">Iron</keyword>
<keyword id="KW-0551">Lipid droplet</keyword>
<keyword id="KW-0472">Membrane</keyword>
<keyword id="KW-0479">Metal-binding</keyword>
<keyword id="KW-0492">Microsome</keyword>
<keyword id="KW-0560">Oxidoreductase</keyword>
<sequence>MASNESLQTTAAMAPVTIERRVNPNLDDELPKPFLPRALVAVDTEHPSGTPGHQHGDMSVLQQHVAFFDRNNDGIVYPWETFLGLRAVGFNIIISFFGCLIINISLSYATLPGWIPSPFFPIYIDRIHRAKHGSDSEVYDTEGRFVPSKFEEIFTKNARTHPDKLSFSELWNLTEHNRNALDPLGWVAAKLEWFLLYLLAKDPHGFVPKEAARGVFDGSLFEFCEKSRRSNKQQ</sequence>
<dbReference type="EC" id="1.11.2.3" evidence="2"/>
<dbReference type="EMBL" id="KX688795">
    <property type="protein sequence ID" value="AOZ15520.1"/>
    <property type="molecule type" value="mRNA"/>
</dbReference>
<dbReference type="GO" id="GO:0005783">
    <property type="term" value="C:endoplasmic reticulum"/>
    <property type="evidence" value="ECO:0007669"/>
    <property type="project" value="UniProtKB-KW"/>
</dbReference>
<dbReference type="GO" id="GO:0016020">
    <property type="term" value="C:membrane"/>
    <property type="evidence" value="ECO:0007669"/>
    <property type="project" value="UniProtKB-KW"/>
</dbReference>
<dbReference type="GO" id="GO:0012511">
    <property type="term" value="C:monolayer-surrounded lipid storage body"/>
    <property type="evidence" value="ECO:0000314"/>
    <property type="project" value="UniProtKB"/>
</dbReference>
<dbReference type="GO" id="GO:0005509">
    <property type="term" value="F:calcium ion binding"/>
    <property type="evidence" value="ECO:0000250"/>
    <property type="project" value="UniProtKB"/>
</dbReference>
<dbReference type="GO" id="GO:0020037">
    <property type="term" value="F:heme binding"/>
    <property type="evidence" value="ECO:0000250"/>
    <property type="project" value="UniProtKB"/>
</dbReference>
<dbReference type="GO" id="GO:0004497">
    <property type="term" value="F:monooxygenase activity"/>
    <property type="evidence" value="ECO:0007669"/>
    <property type="project" value="TreeGrafter"/>
</dbReference>
<dbReference type="GO" id="GO:1990137">
    <property type="term" value="F:plant seed peroxygenase activity"/>
    <property type="evidence" value="ECO:0000250"/>
    <property type="project" value="UniProtKB"/>
</dbReference>
<dbReference type="GO" id="GO:0042803">
    <property type="term" value="F:protein homodimerization activity"/>
    <property type="evidence" value="ECO:0000250"/>
    <property type="project" value="UniProtKB"/>
</dbReference>
<dbReference type="GO" id="GO:0010888">
    <property type="term" value="P:negative regulation of lipid storage"/>
    <property type="evidence" value="ECO:0000250"/>
    <property type="project" value="UniProtKB"/>
</dbReference>
<dbReference type="InterPro" id="IPR007736">
    <property type="entry name" value="Caleosin-related"/>
</dbReference>
<dbReference type="PANTHER" id="PTHR31495:SF20">
    <property type="entry name" value="CALEOSIN-RELATED FAMILY PROTEIN"/>
    <property type="match status" value="1"/>
</dbReference>
<dbReference type="PANTHER" id="PTHR31495">
    <property type="entry name" value="PEROXYGENASE 3-RELATED"/>
    <property type="match status" value="1"/>
</dbReference>
<dbReference type="Pfam" id="PF05042">
    <property type="entry name" value="Caleosin"/>
    <property type="match status" value="1"/>
</dbReference>
<evidence type="ECO:0000250" key="1">
    <source>
        <dbReference type="UniProtKB" id="O22788"/>
    </source>
</evidence>
<evidence type="ECO:0000250" key="2">
    <source>
        <dbReference type="UniProtKB" id="O81270"/>
    </source>
</evidence>
<evidence type="ECO:0000250" key="3">
    <source>
        <dbReference type="UniProtKB" id="Q9SQ57"/>
    </source>
</evidence>
<evidence type="ECO:0000255" key="4"/>
<evidence type="ECO:0000269" key="5">
    <source>
    </source>
</evidence>
<evidence type="ECO:0000303" key="6">
    <source>
    </source>
</evidence>
<evidence type="ECO:0000305" key="7"/>
<evidence type="ECO:0000305" key="8">
    <source>
    </source>
</evidence>
<evidence type="ECO:0000312" key="9">
    <source>
        <dbReference type="EMBL" id="AOZ15520.1"/>
    </source>
</evidence>
<proteinExistence type="evidence at protein level"/>
<protein>
    <recommendedName>
        <fullName evidence="7">Peroxygenase</fullName>
        <ecNumber evidence="2">1.11.2.3</ecNumber>
    </recommendedName>
    <alternativeName>
        <fullName evidence="6 9">Caleosin</fullName>
    </alternativeName>
</protein>
<name>PXG_PINEL</name>
<accession>A0A1I9R3Y5</accession>
<reference key="1">
    <citation type="journal article" date="2017" name="Plant Physiol. Biochem.">
        <title>Identification of caleosin and oleosin in oil bodies of pine pollen.</title>
        <authorList>
            <person name="Pasaribu B."/>
            <person name="Chen C.S."/>
            <person name="Liao Y.K."/>
            <person name="Jiang P.L."/>
            <person name="Tzen J.T.C."/>
        </authorList>
    </citation>
    <scope>NUCLEOTIDE SEQUENCE [MRNA]</scope>
    <scope>SUBCELLULAR LOCATION</scope>
    <scope>TISSUE SPECIFICITY</scope>
    <source>
        <tissue evidence="6">Pollen</tissue>
    </source>
</reference>